<gene>
    <name evidence="1" type="primary">yeeN</name>
    <name type="ordered locus">SPA4319</name>
</gene>
<name>YEEN_SALPA</name>
<accession>Q5PIE3</accession>
<protein>
    <recommendedName>
        <fullName evidence="1">Probable transcriptional regulatory protein YeeN</fullName>
    </recommendedName>
</protein>
<proteinExistence type="inferred from homology"/>
<comment type="subcellular location">
    <subcellularLocation>
        <location evidence="1">Cytoplasm</location>
    </subcellularLocation>
</comment>
<comment type="similarity">
    <text evidence="1">Belongs to the TACO1 family. YeeN subfamily.</text>
</comment>
<comment type="sequence caution" evidence="2">
    <conflict type="erroneous initiation">
        <sequence resource="EMBL-CDS" id="AAV80046"/>
    </conflict>
</comment>
<evidence type="ECO:0000255" key="1">
    <source>
        <dbReference type="HAMAP-Rule" id="MF_00918"/>
    </source>
</evidence>
<evidence type="ECO:0000305" key="2"/>
<reference key="1">
    <citation type="journal article" date="2004" name="Nat. Genet.">
        <title>Comparison of genome degradation in Paratyphi A and Typhi, human-restricted serovars of Salmonella enterica that cause typhoid.</title>
        <authorList>
            <person name="McClelland M."/>
            <person name="Sanderson K.E."/>
            <person name="Clifton S.W."/>
            <person name="Latreille P."/>
            <person name="Porwollik S."/>
            <person name="Sabo A."/>
            <person name="Meyer R."/>
            <person name="Bieri T."/>
            <person name="Ozersky P."/>
            <person name="McLellan M."/>
            <person name="Harkins C.R."/>
            <person name="Wang C."/>
            <person name="Nguyen C."/>
            <person name="Berghoff A."/>
            <person name="Elliott G."/>
            <person name="Kohlberg S."/>
            <person name="Strong C."/>
            <person name="Du F."/>
            <person name="Carter J."/>
            <person name="Kremizki C."/>
            <person name="Layman D."/>
            <person name="Leonard S."/>
            <person name="Sun H."/>
            <person name="Fulton L."/>
            <person name="Nash W."/>
            <person name="Miner T."/>
            <person name="Minx P."/>
            <person name="Delehaunty K."/>
            <person name="Fronick C."/>
            <person name="Magrini V."/>
            <person name="Nhan M."/>
            <person name="Warren W."/>
            <person name="Florea L."/>
            <person name="Spieth J."/>
            <person name="Wilson R.K."/>
        </authorList>
    </citation>
    <scope>NUCLEOTIDE SEQUENCE [LARGE SCALE GENOMIC DNA]</scope>
    <source>
        <strain>ATCC 9150 / SARB42</strain>
    </source>
</reference>
<sequence>MGRKWANIVAKKTAKDGATSKVYAKFGVEIYAAAKQGEPDPESNSALKFVIERAKQAQVPKHVIDKAIDKAKGGGDETFVQGRYEGFGPNGSMVIAETLTSNVNRTIANIRTIFNKKGGNIGAAGAVSYMFDNTGVIVFKGTDPDHIFEILLDAEVDVRDVTEEEGNIVIYTEATDLHKGIAALKAAGITEFSTTELEMIAQSEVELSPEDLEIFEGLVDALEDDDDVQKVYHNVANL</sequence>
<feature type="chain" id="PRO_0000175882" description="Probable transcriptional regulatory protein YeeN">
    <location>
        <begin position="1"/>
        <end position="238"/>
    </location>
</feature>
<organism>
    <name type="scientific">Salmonella paratyphi A (strain ATCC 9150 / SARB42)</name>
    <dbReference type="NCBI Taxonomy" id="295319"/>
    <lineage>
        <taxon>Bacteria</taxon>
        <taxon>Pseudomonadati</taxon>
        <taxon>Pseudomonadota</taxon>
        <taxon>Gammaproteobacteria</taxon>
        <taxon>Enterobacterales</taxon>
        <taxon>Enterobacteriaceae</taxon>
        <taxon>Salmonella</taxon>
    </lineage>
</organism>
<keyword id="KW-0963">Cytoplasm</keyword>
<keyword id="KW-0238">DNA-binding</keyword>
<keyword id="KW-0804">Transcription</keyword>
<keyword id="KW-0805">Transcription regulation</keyword>
<dbReference type="EMBL" id="CP000026">
    <property type="protein sequence ID" value="AAV80046.1"/>
    <property type="status" value="ALT_INIT"/>
    <property type="molecule type" value="Genomic_DNA"/>
</dbReference>
<dbReference type="RefSeq" id="WP_000532939.1">
    <property type="nucleotide sequence ID" value="NC_006511.1"/>
</dbReference>
<dbReference type="SMR" id="Q5PIE3"/>
<dbReference type="KEGG" id="spt:SPA4319"/>
<dbReference type="HOGENOM" id="CLU_062974_2_0_6"/>
<dbReference type="Proteomes" id="UP000008185">
    <property type="component" value="Chromosome"/>
</dbReference>
<dbReference type="GO" id="GO:0005829">
    <property type="term" value="C:cytosol"/>
    <property type="evidence" value="ECO:0007669"/>
    <property type="project" value="TreeGrafter"/>
</dbReference>
<dbReference type="GO" id="GO:0003677">
    <property type="term" value="F:DNA binding"/>
    <property type="evidence" value="ECO:0007669"/>
    <property type="project" value="UniProtKB-UniRule"/>
</dbReference>
<dbReference type="GO" id="GO:0006355">
    <property type="term" value="P:regulation of DNA-templated transcription"/>
    <property type="evidence" value="ECO:0007669"/>
    <property type="project" value="UniProtKB-UniRule"/>
</dbReference>
<dbReference type="FunFam" id="1.10.10.200:FF:000003">
    <property type="entry name" value="Probable transcriptional regulatory protein YeeN"/>
    <property type="match status" value="1"/>
</dbReference>
<dbReference type="FunFam" id="3.30.70.980:FF:000004">
    <property type="entry name" value="Probable transcriptional regulatory protein YeeN"/>
    <property type="match status" value="1"/>
</dbReference>
<dbReference type="Gene3D" id="1.10.10.200">
    <property type="match status" value="1"/>
</dbReference>
<dbReference type="Gene3D" id="3.30.70.980">
    <property type="match status" value="2"/>
</dbReference>
<dbReference type="HAMAP" id="MF_00693">
    <property type="entry name" value="Transcrip_reg_TACO1"/>
    <property type="match status" value="1"/>
</dbReference>
<dbReference type="HAMAP" id="MF_00918">
    <property type="entry name" value="Transcrip_reg_TACO1_YeeN"/>
    <property type="match status" value="1"/>
</dbReference>
<dbReference type="InterPro" id="IPR017856">
    <property type="entry name" value="Integrase-like_N"/>
</dbReference>
<dbReference type="InterPro" id="IPR048300">
    <property type="entry name" value="TACO1_YebC-like_2nd/3rd_dom"/>
</dbReference>
<dbReference type="InterPro" id="IPR049083">
    <property type="entry name" value="TACO1_YebC_N"/>
</dbReference>
<dbReference type="InterPro" id="IPR002876">
    <property type="entry name" value="Transcrip_reg_TACO1-like"/>
</dbReference>
<dbReference type="InterPro" id="IPR026564">
    <property type="entry name" value="Transcrip_reg_TACO1-like_dom3"/>
</dbReference>
<dbReference type="InterPro" id="IPR026562">
    <property type="entry name" value="Transcrip_reg_TACO1_YeeN"/>
</dbReference>
<dbReference type="InterPro" id="IPR029072">
    <property type="entry name" value="YebC-like"/>
</dbReference>
<dbReference type="NCBIfam" id="NF009044">
    <property type="entry name" value="PRK12378.1"/>
    <property type="match status" value="1"/>
</dbReference>
<dbReference type="NCBIfam" id="TIGR01033">
    <property type="entry name" value="YebC/PmpR family DNA-binding transcriptional regulator"/>
    <property type="match status" value="1"/>
</dbReference>
<dbReference type="PANTHER" id="PTHR12532">
    <property type="entry name" value="TRANSLATIONAL ACTIVATOR OF CYTOCHROME C OXIDASE 1"/>
    <property type="match status" value="1"/>
</dbReference>
<dbReference type="PANTHER" id="PTHR12532:SF0">
    <property type="entry name" value="TRANSLATIONAL ACTIVATOR OF CYTOCHROME C OXIDASE 1"/>
    <property type="match status" value="1"/>
</dbReference>
<dbReference type="Pfam" id="PF20772">
    <property type="entry name" value="TACO1_YebC_N"/>
    <property type="match status" value="1"/>
</dbReference>
<dbReference type="Pfam" id="PF01709">
    <property type="entry name" value="Transcrip_reg"/>
    <property type="match status" value="1"/>
</dbReference>
<dbReference type="SUPFAM" id="SSF75625">
    <property type="entry name" value="YebC-like"/>
    <property type="match status" value="1"/>
</dbReference>